<accession>Q0ITU1</accession>
<accession>A0A0P0Y063</accession>
<accession>Q2R8T8</accession>
<sequence length="374" mass="39508">MGELGALQSIVYHRGSLRLLDQRKLPLEVDYIDVKCSGDGWNAIRDMVVRGAPAIAIAAALALAVEVSGLEDFTGTPAEAAVFVSEKLEYLVSSRPTAVNLSDAATKLRSLVSRTAETEKDAKAIFQAYIDAAETMLVDDVSDNKAIGSHGAEFLKQKLEVSKDISVLTHCNTGSLATAGYGTALGVIRALHSGGILEKAFCTETRPFNQGSRLTAFELVHDKVPATLIADSAAAALMKSGCIQAVIVGADRIAANGDTANKIGTYNLAISAKHHGVQFYVAAPITSIDLSLPSGEQIVIEERSPNELLNSEGGLGKQVAASGISVWNPAFDVTPANLITAIITEKGVITKSDADETFNIKDFIQSAKLYSTMQ</sequence>
<comment type="function">
    <text evidence="1">Catalyzes the interconversion of methylthioribose-1-phosphate (MTR-1-P) into methylthioribulose-1-phosphate (MTRu-1-P).</text>
</comment>
<comment type="catalytic activity">
    <reaction evidence="1">
        <text>5-(methylsulfanyl)-alpha-D-ribose 1-phosphate = 5-(methylsulfanyl)-D-ribulose 1-phosphate</text>
        <dbReference type="Rhea" id="RHEA:19989"/>
        <dbReference type="ChEBI" id="CHEBI:58533"/>
        <dbReference type="ChEBI" id="CHEBI:58548"/>
        <dbReference type="EC" id="5.3.1.23"/>
    </reaction>
</comment>
<comment type="pathway">
    <text evidence="1">Amino-acid biosynthesis; L-methionine biosynthesis via salvage pathway; L-methionine from S-methyl-5-thio-alpha-D-ribose 1-phosphate: step 1/6.</text>
</comment>
<comment type="subcellular location">
    <subcellularLocation>
        <location evidence="1">Cytoplasm</location>
    </subcellularLocation>
    <subcellularLocation>
        <location evidence="1">Nucleus</location>
    </subcellularLocation>
</comment>
<comment type="induction">
    <text evidence="2">By iron deficiency in roots.</text>
</comment>
<comment type="similarity">
    <text evidence="1">Belongs to the eIF-2B alpha/beta/delta subunits family. MtnA subfamily.</text>
</comment>
<comment type="sequence caution" evidence="3">
    <conflict type="erroneous gene model prediction">
        <sequence resource="EMBL-CDS" id="ABA92066"/>
    </conflict>
</comment>
<evidence type="ECO:0000255" key="1">
    <source>
        <dbReference type="HAMAP-Rule" id="MF_03119"/>
    </source>
</evidence>
<evidence type="ECO:0000269" key="2">
    <source>
    </source>
</evidence>
<evidence type="ECO:0000305" key="3"/>
<name>MTNA_ORYSJ</name>
<feature type="chain" id="PRO_0000401993" description="Methylthioribose-1-phosphate isomerase">
    <location>
        <begin position="1"/>
        <end position="374"/>
    </location>
</feature>
<feature type="active site" description="Proton donor" evidence="1">
    <location>
        <position position="251"/>
    </location>
</feature>
<feature type="site" description="Transition state stabilizer" evidence="1">
    <location>
        <position position="171"/>
    </location>
</feature>
<organism>
    <name type="scientific">Oryza sativa subsp. japonica</name>
    <name type="common">Rice</name>
    <dbReference type="NCBI Taxonomy" id="39947"/>
    <lineage>
        <taxon>Eukaryota</taxon>
        <taxon>Viridiplantae</taxon>
        <taxon>Streptophyta</taxon>
        <taxon>Embryophyta</taxon>
        <taxon>Tracheophyta</taxon>
        <taxon>Spermatophyta</taxon>
        <taxon>Magnoliopsida</taxon>
        <taxon>Liliopsida</taxon>
        <taxon>Poales</taxon>
        <taxon>Poaceae</taxon>
        <taxon>BOP clade</taxon>
        <taxon>Oryzoideae</taxon>
        <taxon>Oryzeae</taxon>
        <taxon>Oryzinae</taxon>
        <taxon>Oryza</taxon>
        <taxon>Oryza sativa</taxon>
    </lineage>
</organism>
<dbReference type="EC" id="5.3.1.23" evidence="1"/>
<dbReference type="EMBL" id="DP000010">
    <property type="protein sequence ID" value="ABA92066.2"/>
    <property type="status" value="ALT_SEQ"/>
    <property type="molecule type" value="Genomic_DNA"/>
</dbReference>
<dbReference type="EMBL" id="AP008217">
    <property type="protein sequence ID" value="BAF27874.1"/>
    <property type="molecule type" value="Genomic_DNA"/>
</dbReference>
<dbReference type="EMBL" id="AP014967">
    <property type="protein sequence ID" value="BAT13224.1"/>
    <property type="molecule type" value="Genomic_DNA"/>
</dbReference>
<dbReference type="EMBL" id="CM000148">
    <property type="protein sequence ID" value="EEE51856.1"/>
    <property type="molecule type" value="Genomic_DNA"/>
</dbReference>
<dbReference type="EMBL" id="AK060549">
    <property type="status" value="NOT_ANNOTATED_CDS"/>
    <property type="molecule type" value="mRNA"/>
</dbReference>
<dbReference type="EMBL" id="BR000390">
    <property type="protein sequence ID" value="FAA00313.1"/>
    <property type="molecule type" value="mRNA"/>
</dbReference>
<dbReference type="RefSeq" id="XP_015617957.1">
    <property type="nucleotide sequence ID" value="XM_015762471.1"/>
</dbReference>
<dbReference type="RefSeq" id="XP_015617958.1">
    <property type="nucleotide sequence ID" value="XM_015762472.1"/>
</dbReference>
<dbReference type="SMR" id="Q0ITU1"/>
<dbReference type="FunCoup" id="Q0ITU1">
    <property type="interactions" value="2839"/>
</dbReference>
<dbReference type="STRING" id="39947.Q0ITU1"/>
<dbReference type="PaxDb" id="39947-Q0ITU1"/>
<dbReference type="EnsemblPlants" id="Os11t0216900-01">
    <property type="protein sequence ID" value="Os11t0216900-01"/>
    <property type="gene ID" value="Os11g0216900"/>
</dbReference>
<dbReference type="EnsemblPlants" id="Os11t0216900-02">
    <property type="protein sequence ID" value="Os11t0216900-02"/>
    <property type="gene ID" value="Os11g0216900"/>
</dbReference>
<dbReference type="EnsemblPlants" id="Os11t0216900-03">
    <property type="protein sequence ID" value="Os11t0216900-03"/>
    <property type="gene ID" value="Os11g0216900"/>
</dbReference>
<dbReference type="Gramene" id="Os11t0216900-01">
    <property type="protein sequence ID" value="Os11t0216900-01"/>
    <property type="gene ID" value="Os11g0216900"/>
</dbReference>
<dbReference type="Gramene" id="Os11t0216900-02">
    <property type="protein sequence ID" value="Os11t0216900-02"/>
    <property type="gene ID" value="Os11g0216900"/>
</dbReference>
<dbReference type="Gramene" id="Os11t0216900-03">
    <property type="protein sequence ID" value="Os11t0216900-03"/>
    <property type="gene ID" value="Os11g0216900"/>
</dbReference>
<dbReference type="KEGG" id="dosa:Os11g0216900"/>
<dbReference type="eggNOG" id="KOG1468">
    <property type="taxonomic scope" value="Eukaryota"/>
</dbReference>
<dbReference type="HOGENOM" id="CLU_016218_1_3_1"/>
<dbReference type="InParanoid" id="Q0ITU1"/>
<dbReference type="OMA" id="CETRPLN"/>
<dbReference type="OrthoDB" id="2461at2759"/>
<dbReference type="PlantReactome" id="R-OSA-1119624">
    <property type="pathway name" value="Methionine salvage pathway"/>
</dbReference>
<dbReference type="UniPathway" id="UPA00904">
    <property type="reaction ID" value="UER00874"/>
</dbReference>
<dbReference type="Proteomes" id="UP000000763">
    <property type="component" value="Chromosome 11"/>
</dbReference>
<dbReference type="Proteomes" id="UP000007752">
    <property type="component" value="Chromosome 11"/>
</dbReference>
<dbReference type="Proteomes" id="UP000059680">
    <property type="component" value="Chromosome 11"/>
</dbReference>
<dbReference type="GO" id="GO:0005737">
    <property type="term" value="C:cytoplasm"/>
    <property type="evidence" value="ECO:0007669"/>
    <property type="project" value="UniProtKB-SubCell"/>
</dbReference>
<dbReference type="GO" id="GO:0005634">
    <property type="term" value="C:nucleus"/>
    <property type="evidence" value="ECO:0007669"/>
    <property type="project" value="UniProtKB-SubCell"/>
</dbReference>
<dbReference type="GO" id="GO:0046523">
    <property type="term" value="F:S-methyl-5-thioribose-1-phosphate isomerase activity"/>
    <property type="evidence" value="ECO:0000318"/>
    <property type="project" value="GO_Central"/>
</dbReference>
<dbReference type="GO" id="GO:0019509">
    <property type="term" value="P:L-methionine salvage from methylthioadenosine"/>
    <property type="evidence" value="ECO:0000318"/>
    <property type="project" value="GO_Central"/>
</dbReference>
<dbReference type="FunFam" id="1.20.120.420:FF:000002">
    <property type="entry name" value="Methylthioribose-1-phosphate isomerase"/>
    <property type="match status" value="1"/>
</dbReference>
<dbReference type="FunFam" id="3.40.50.10470:FF:000003">
    <property type="entry name" value="Methylthioribose-1-phosphate isomerase"/>
    <property type="match status" value="1"/>
</dbReference>
<dbReference type="Gene3D" id="1.20.120.420">
    <property type="entry name" value="translation initiation factor eif-2b, domain 1"/>
    <property type="match status" value="1"/>
</dbReference>
<dbReference type="Gene3D" id="3.40.50.10470">
    <property type="entry name" value="Translation initiation factor eif-2b, domain 2"/>
    <property type="match status" value="1"/>
</dbReference>
<dbReference type="HAMAP" id="MF_01678">
    <property type="entry name" value="Salvage_MtnA"/>
    <property type="match status" value="1"/>
</dbReference>
<dbReference type="InterPro" id="IPR000649">
    <property type="entry name" value="IF-2B-related"/>
</dbReference>
<dbReference type="InterPro" id="IPR005251">
    <property type="entry name" value="IF-M1Pi"/>
</dbReference>
<dbReference type="InterPro" id="IPR042529">
    <property type="entry name" value="IF_2B-like_C"/>
</dbReference>
<dbReference type="InterPro" id="IPR011559">
    <property type="entry name" value="Initiation_fac_2B_a/b/d"/>
</dbReference>
<dbReference type="InterPro" id="IPR027363">
    <property type="entry name" value="M1Pi_N"/>
</dbReference>
<dbReference type="InterPro" id="IPR037171">
    <property type="entry name" value="NagB/RpiA_transferase-like"/>
</dbReference>
<dbReference type="NCBIfam" id="TIGR00524">
    <property type="entry name" value="eIF-2B_rel"/>
    <property type="match status" value="1"/>
</dbReference>
<dbReference type="NCBIfam" id="NF004326">
    <property type="entry name" value="PRK05720.1"/>
    <property type="match status" value="1"/>
</dbReference>
<dbReference type="NCBIfam" id="TIGR00512">
    <property type="entry name" value="salvage_mtnA"/>
    <property type="match status" value="1"/>
</dbReference>
<dbReference type="PANTHER" id="PTHR43475">
    <property type="entry name" value="METHYLTHIORIBOSE-1-PHOSPHATE ISOMERASE"/>
    <property type="match status" value="1"/>
</dbReference>
<dbReference type="PANTHER" id="PTHR43475:SF1">
    <property type="entry name" value="METHYLTHIORIBOSE-1-PHOSPHATE ISOMERASE"/>
    <property type="match status" value="1"/>
</dbReference>
<dbReference type="Pfam" id="PF01008">
    <property type="entry name" value="IF-2B"/>
    <property type="match status" value="1"/>
</dbReference>
<dbReference type="SUPFAM" id="SSF100950">
    <property type="entry name" value="NagB/RpiA/CoA transferase-like"/>
    <property type="match status" value="1"/>
</dbReference>
<proteinExistence type="evidence at transcript level"/>
<protein>
    <recommendedName>
        <fullName evidence="1">Methylthioribose-1-phosphate isomerase</fullName>
        <shortName evidence="1">M1Pi</shortName>
        <shortName evidence="1">MTR-1-P isomerase</shortName>
        <ecNumber evidence="1">5.3.1.23</ecNumber>
    </recommendedName>
    <alternativeName>
        <fullName>Protein IRON DEFICIENCY INDUCIBLE 2</fullName>
        <shortName>OsIDI2</shortName>
    </alternativeName>
    <alternativeName>
        <fullName evidence="1">S-methyl-5-thioribose-1-phosphate isomerase</fullName>
    </alternativeName>
    <alternativeName>
        <fullName evidence="1">Translation initiation factor eIF-2B subunit alpha/beta/delta-like protein</fullName>
    </alternativeName>
</protein>
<gene>
    <name type="primary">IDI2</name>
    <name type="ordered locus">Os11g0216900</name>
    <name type="ordered locus">LOC_Os11g11050</name>
    <name type="ORF">OsJ_33377</name>
</gene>
<reference key="1">
    <citation type="journal article" date="2005" name="BMC Biol.">
        <title>The sequence of rice chromosomes 11 and 12, rich in disease resistance genes and recent gene duplications.</title>
        <authorList>
            <consortium name="The rice chromosomes 11 and 12 sequencing consortia"/>
        </authorList>
    </citation>
    <scope>NUCLEOTIDE SEQUENCE [LARGE SCALE GENOMIC DNA]</scope>
    <source>
        <strain>cv. Nipponbare</strain>
    </source>
</reference>
<reference key="2">
    <citation type="journal article" date="2005" name="Nature">
        <title>The map-based sequence of the rice genome.</title>
        <authorList>
            <consortium name="International rice genome sequencing project (IRGSP)"/>
        </authorList>
    </citation>
    <scope>NUCLEOTIDE SEQUENCE [LARGE SCALE GENOMIC DNA]</scope>
    <source>
        <strain>cv. Nipponbare</strain>
    </source>
</reference>
<reference key="3">
    <citation type="journal article" date="2008" name="Nucleic Acids Res.">
        <title>The rice annotation project database (RAP-DB): 2008 update.</title>
        <authorList>
            <consortium name="The rice annotation project (RAP)"/>
        </authorList>
    </citation>
    <scope>GENOME REANNOTATION</scope>
    <source>
        <strain>cv. Nipponbare</strain>
    </source>
</reference>
<reference key="4">
    <citation type="journal article" date="2013" name="Rice">
        <title>Improvement of the Oryza sativa Nipponbare reference genome using next generation sequence and optical map data.</title>
        <authorList>
            <person name="Kawahara Y."/>
            <person name="de la Bastide M."/>
            <person name="Hamilton J.P."/>
            <person name="Kanamori H."/>
            <person name="McCombie W.R."/>
            <person name="Ouyang S."/>
            <person name="Schwartz D.C."/>
            <person name="Tanaka T."/>
            <person name="Wu J."/>
            <person name="Zhou S."/>
            <person name="Childs K.L."/>
            <person name="Davidson R.M."/>
            <person name="Lin H."/>
            <person name="Quesada-Ocampo L."/>
            <person name="Vaillancourt B."/>
            <person name="Sakai H."/>
            <person name="Lee S.S."/>
            <person name="Kim J."/>
            <person name="Numa H."/>
            <person name="Itoh T."/>
            <person name="Buell C.R."/>
            <person name="Matsumoto T."/>
        </authorList>
    </citation>
    <scope>GENOME REANNOTATION</scope>
    <source>
        <strain>cv. Nipponbare</strain>
    </source>
</reference>
<reference key="5">
    <citation type="journal article" date="2005" name="PLoS Biol.">
        <title>The genomes of Oryza sativa: a history of duplications.</title>
        <authorList>
            <person name="Yu J."/>
            <person name="Wang J."/>
            <person name="Lin W."/>
            <person name="Li S."/>
            <person name="Li H."/>
            <person name="Zhou J."/>
            <person name="Ni P."/>
            <person name="Dong W."/>
            <person name="Hu S."/>
            <person name="Zeng C."/>
            <person name="Zhang J."/>
            <person name="Zhang Y."/>
            <person name="Li R."/>
            <person name="Xu Z."/>
            <person name="Li S."/>
            <person name="Li X."/>
            <person name="Zheng H."/>
            <person name="Cong L."/>
            <person name="Lin L."/>
            <person name="Yin J."/>
            <person name="Geng J."/>
            <person name="Li G."/>
            <person name="Shi J."/>
            <person name="Liu J."/>
            <person name="Lv H."/>
            <person name="Li J."/>
            <person name="Wang J."/>
            <person name="Deng Y."/>
            <person name="Ran L."/>
            <person name="Shi X."/>
            <person name="Wang X."/>
            <person name="Wu Q."/>
            <person name="Li C."/>
            <person name="Ren X."/>
            <person name="Wang J."/>
            <person name="Wang X."/>
            <person name="Li D."/>
            <person name="Liu D."/>
            <person name="Zhang X."/>
            <person name="Ji Z."/>
            <person name="Zhao W."/>
            <person name="Sun Y."/>
            <person name="Zhang Z."/>
            <person name="Bao J."/>
            <person name="Han Y."/>
            <person name="Dong L."/>
            <person name="Ji J."/>
            <person name="Chen P."/>
            <person name="Wu S."/>
            <person name="Liu J."/>
            <person name="Xiao Y."/>
            <person name="Bu D."/>
            <person name="Tan J."/>
            <person name="Yang L."/>
            <person name="Ye C."/>
            <person name="Zhang J."/>
            <person name="Xu J."/>
            <person name="Zhou Y."/>
            <person name="Yu Y."/>
            <person name="Zhang B."/>
            <person name="Zhuang S."/>
            <person name="Wei H."/>
            <person name="Liu B."/>
            <person name="Lei M."/>
            <person name="Yu H."/>
            <person name="Li Y."/>
            <person name="Xu H."/>
            <person name="Wei S."/>
            <person name="He X."/>
            <person name="Fang L."/>
            <person name="Zhang Z."/>
            <person name="Zhang Y."/>
            <person name="Huang X."/>
            <person name="Su Z."/>
            <person name="Tong W."/>
            <person name="Li J."/>
            <person name="Tong Z."/>
            <person name="Li S."/>
            <person name="Ye J."/>
            <person name="Wang L."/>
            <person name="Fang L."/>
            <person name="Lei T."/>
            <person name="Chen C.-S."/>
            <person name="Chen H.-C."/>
            <person name="Xu Z."/>
            <person name="Li H."/>
            <person name="Huang H."/>
            <person name="Zhang F."/>
            <person name="Xu H."/>
            <person name="Li N."/>
            <person name="Zhao C."/>
            <person name="Li S."/>
            <person name="Dong L."/>
            <person name="Huang Y."/>
            <person name="Li L."/>
            <person name="Xi Y."/>
            <person name="Qi Q."/>
            <person name="Li W."/>
            <person name="Zhang B."/>
            <person name="Hu W."/>
            <person name="Zhang Y."/>
            <person name="Tian X."/>
            <person name="Jiao Y."/>
            <person name="Liang X."/>
            <person name="Jin J."/>
            <person name="Gao L."/>
            <person name="Zheng W."/>
            <person name="Hao B."/>
            <person name="Liu S.-M."/>
            <person name="Wang W."/>
            <person name="Yuan L."/>
            <person name="Cao M."/>
            <person name="McDermott J."/>
            <person name="Samudrala R."/>
            <person name="Wang J."/>
            <person name="Wong G.K.-S."/>
            <person name="Yang H."/>
        </authorList>
    </citation>
    <scope>NUCLEOTIDE SEQUENCE [LARGE SCALE GENOMIC DNA]</scope>
    <source>
        <strain>cv. Nipponbare</strain>
    </source>
</reference>
<reference key="6">
    <citation type="journal article" date="2003" name="Science">
        <title>Collection, mapping, and annotation of over 28,000 cDNA clones from japonica rice.</title>
        <authorList>
            <consortium name="The rice full-length cDNA consortium"/>
        </authorList>
    </citation>
    <scope>NUCLEOTIDE SEQUENCE [LARGE SCALE MRNA]</scope>
    <source>
        <strain>cv. Nipponbare</strain>
    </source>
</reference>
<reference key="7">
    <citation type="journal article" date="2005" name="J. Exp. Bot.">
        <title>Expression of iron-acquisition-related genes in iron-deficient rice is co-ordinately induced by partially conserved iron-deficiency-responsive elements.</title>
        <authorList>
            <person name="Kobayashi T."/>
            <person name="Suzuki M."/>
            <person name="Inoue H."/>
            <person name="Itai R.N."/>
            <person name="Takahashi M."/>
            <person name="Nakanishi H."/>
            <person name="Mori S."/>
            <person name="Nishizawa N.K."/>
        </authorList>
    </citation>
    <scope>IDENTIFICATION</scope>
    <scope>INDUCTION</scope>
</reference>
<keyword id="KW-0028">Amino-acid biosynthesis</keyword>
<keyword id="KW-0963">Cytoplasm</keyword>
<keyword id="KW-0413">Isomerase</keyword>
<keyword id="KW-0486">Methionine biosynthesis</keyword>
<keyword id="KW-0539">Nucleus</keyword>
<keyword id="KW-1185">Reference proteome</keyword>